<dbReference type="EC" id="4.2.1.59" evidence="1"/>
<dbReference type="EC" id="5.3.3.14" evidence="1"/>
<dbReference type="EMBL" id="CP000076">
    <property type="protein sequence ID" value="AAY91032.1"/>
    <property type="molecule type" value="Genomic_DNA"/>
</dbReference>
<dbReference type="RefSeq" id="WP_011060067.1">
    <property type="nucleotide sequence ID" value="NC_004129.6"/>
</dbReference>
<dbReference type="SMR" id="Q4KFX0"/>
<dbReference type="STRING" id="220664.PFL_1737"/>
<dbReference type="GeneID" id="89623582"/>
<dbReference type="KEGG" id="pfl:PFL_1737"/>
<dbReference type="eggNOG" id="COG0764">
    <property type="taxonomic scope" value="Bacteria"/>
</dbReference>
<dbReference type="HOGENOM" id="CLU_097925_0_0_6"/>
<dbReference type="UniPathway" id="UPA00094"/>
<dbReference type="Proteomes" id="UP000008540">
    <property type="component" value="Chromosome"/>
</dbReference>
<dbReference type="GO" id="GO:0005737">
    <property type="term" value="C:cytoplasm"/>
    <property type="evidence" value="ECO:0007669"/>
    <property type="project" value="UniProtKB-SubCell"/>
</dbReference>
<dbReference type="GO" id="GO:0019171">
    <property type="term" value="F:(3R)-hydroxyacyl-[acyl-carrier-protein] dehydratase activity"/>
    <property type="evidence" value="ECO:0007669"/>
    <property type="project" value="UniProtKB-UniRule"/>
</dbReference>
<dbReference type="GO" id="GO:0034017">
    <property type="term" value="F:trans-2-decenoyl-acyl-carrier-protein isomerase activity"/>
    <property type="evidence" value="ECO:0007669"/>
    <property type="project" value="UniProtKB-UniRule"/>
</dbReference>
<dbReference type="GO" id="GO:0006636">
    <property type="term" value="P:unsaturated fatty acid biosynthetic process"/>
    <property type="evidence" value="ECO:0007669"/>
    <property type="project" value="UniProtKB-UniRule"/>
</dbReference>
<dbReference type="CDD" id="cd01287">
    <property type="entry name" value="FabA"/>
    <property type="match status" value="1"/>
</dbReference>
<dbReference type="FunFam" id="3.10.129.10:FF:000003">
    <property type="entry name" value="3-hydroxydecanoyl-[acyl-carrier-protein] dehydratase"/>
    <property type="match status" value="1"/>
</dbReference>
<dbReference type="Gene3D" id="3.10.129.10">
    <property type="entry name" value="Hotdog Thioesterase"/>
    <property type="match status" value="1"/>
</dbReference>
<dbReference type="HAMAP" id="MF_00405">
    <property type="entry name" value="FabA"/>
    <property type="match status" value="1"/>
</dbReference>
<dbReference type="InterPro" id="IPR010083">
    <property type="entry name" value="FabA"/>
</dbReference>
<dbReference type="InterPro" id="IPR013114">
    <property type="entry name" value="FabA_FabZ"/>
</dbReference>
<dbReference type="InterPro" id="IPR029069">
    <property type="entry name" value="HotDog_dom_sf"/>
</dbReference>
<dbReference type="NCBIfam" id="TIGR01749">
    <property type="entry name" value="fabA"/>
    <property type="match status" value="1"/>
</dbReference>
<dbReference type="NCBIfam" id="NF003509">
    <property type="entry name" value="PRK05174.1"/>
    <property type="match status" value="1"/>
</dbReference>
<dbReference type="PANTHER" id="PTHR30272">
    <property type="entry name" value="3-HYDROXYACYL-[ACYL-CARRIER-PROTEIN] DEHYDRATASE"/>
    <property type="match status" value="1"/>
</dbReference>
<dbReference type="PANTHER" id="PTHR30272:SF8">
    <property type="entry name" value="3-HYDROXYDECANOYL-[ACYL-CARRIER-PROTEIN] DEHYDRATASE"/>
    <property type="match status" value="1"/>
</dbReference>
<dbReference type="Pfam" id="PF07977">
    <property type="entry name" value="FabA"/>
    <property type="match status" value="1"/>
</dbReference>
<dbReference type="SUPFAM" id="SSF54637">
    <property type="entry name" value="Thioesterase/thiol ester dehydrase-isomerase"/>
    <property type="match status" value="1"/>
</dbReference>
<proteinExistence type="inferred from homology"/>
<feature type="chain" id="PRO_0000267741" description="3-hydroxydecanoyl-[acyl-carrier-protein] dehydratase">
    <location>
        <begin position="1"/>
        <end position="171"/>
    </location>
</feature>
<feature type="active site" evidence="1">
    <location>
        <position position="70"/>
    </location>
</feature>
<accession>Q4KFX0</accession>
<evidence type="ECO:0000255" key="1">
    <source>
        <dbReference type="HAMAP-Rule" id="MF_00405"/>
    </source>
</evidence>
<sequence length="171" mass="18727">MTKQNAFTREDLLRCSRGELFGPGNAQLPAPNMLMVDRITHISEEGGKYGKGELVAELDITPDLWFFACHFEGDPVMPGCLGLDAMWQLVGFFLGWQGLPGRGRALGSGEVKFFGQVLPTAKKVTYNIHIKRVLKGKLNMAIADGSVSVDGREIYTAEGLRVGVFTSTDNF</sequence>
<organism>
    <name type="scientific">Pseudomonas fluorescens (strain ATCC BAA-477 / NRRL B-23932 / Pf-5)</name>
    <dbReference type="NCBI Taxonomy" id="220664"/>
    <lineage>
        <taxon>Bacteria</taxon>
        <taxon>Pseudomonadati</taxon>
        <taxon>Pseudomonadota</taxon>
        <taxon>Gammaproteobacteria</taxon>
        <taxon>Pseudomonadales</taxon>
        <taxon>Pseudomonadaceae</taxon>
        <taxon>Pseudomonas</taxon>
    </lineage>
</organism>
<reference key="1">
    <citation type="journal article" date="2005" name="Nat. Biotechnol.">
        <title>Complete genome sequence of the plant commensal Pseudomonas fluorescens Pf-5.</title>
        <authorList>
            <person name="Paulsen I.T."/>
            <person name="Press C.M."/>
            <person name="Ravel J."/>
            <person name="Kobayashi D.Y."/>
            <person name="Myers G.S.A."/>
            <person name="Mavrodi D.V."/>
            <person name="DeBoy R.T."/>
            <person name="Seshadri R."/>
            <person name="Ren Q."/>
            <person name="Madupu R."/>
            <person name="Dodson R.J."/>
            <person name="Durkin A.S."/>
            <person name="Brinkac L.M."/>
            <person name="Daugherty S.C."/>
            <person name="Sullivan S.A."/>
            <person name="Rosovitz M.J."/>
            <person name="Gwinn M.L."/>
            <person name="Zhou L."/>
            <person name="Schneider D.J."/>
            <person name="Cartinhour S.W."/>
            <person name="Nelson W.C."/>
            <person name="Weidman J."/>
            <person name="Watkins K."/>
            <person name="Tran K."/>
            <person name="Khouri H."/>
            <person name="Pierson E.A."/>
            <person name="Pierson L.S. III"/>
            <person name="Thomashow L.S."/>
            <person name="Loper J.E."/>
        </authorList>
    </citation>
    <scope>NUCLEOTIDE SEQUENCE [LARGE SCALE GENOMIC DNA]</scope>
    <source>
        <strain>ATCC BAA-477 / NRRL B-23932 / Pf-5</strain>
    </source>
</reference>
<name>FABA_PSEF5</name>
<keyword id="KW-0963">Cytoplasm</keyword>
<keyword id="KW-0275">Fatty acid biosynthesis</keyword>
<keyword id="KW-0276">Fatty acid metabolism</keyword>
<keyword id="KW-0413">Isomerase</keyword>
<keyword id="KW-0444">Lipid biosynthesis</keyword>
<keyword id="KW-0443">Lipid metabolism</keyword>
<keyword id="KW-0456">Lyase</keyword>
<comment type="function">
    <text evidence="1">Necessary for the introduction of cis unsaturation into fatty acids. Catalyzes the dehydration of (3R)-3-hydroxydecanoyl-ACP to E-(2)-decenoyl-ACP and then its isomerization to Z-(3)-decenoyl-ACP. Can catalyze the dehydratase reaction for beta-hydroxyacyl-ACPs with saturated chain lengths up to 16:0, being most active on intermediate chain length.</text>
</comment>
<comment type="catalytic activity">
    <reaction evidence="1">
        <text>a (3R)-hydroxyacyl-[ACP] = a (2E)-enoyl-[ACP] + H2O</text>
        <dbReference type="Rhea" id="RHEA:13097"/>
        <dbReference type="Rhea" id="RHEA-COMP:9925"/>
        <dbReference type="Rhea" id="RHEA-COMP:9945"/>
        <dbReference type="ChEBI" id="CHEBI:15377"/>
        <dbReference type="ChEBI" id="CHEBI:78784"/>
        <dbReference type="ChEBI" id="CHEBI:78827"/>
        <dbReference type="EC" id="4.2.1.59"/>
    </reaction>
</comment>
<comment type="catalytic activity">
    <reaction evidence="1">
        <text>(3R)-hydroxydecanoyl-[ACP] = (2E)-decenoyl-[ACP] + H2O</text>
        <dbReference type="Rhea" id="RHEA:41860"/>
        <dbReference type="Rhea" id="RHEA-COMP:9638"/>
        <dbReference type="Rhea" id="RHEA-COMP:9639"/>
        <dbReference type="ChEBI" id="CHEBI:15377"/>
        <dbReference type="ChEBI" id="CHEBI:78466"/>
        <dbReference type="ChEBI" id="CHEBI:78467"/>
    </reaction>
</comment>
<comment type="catalytic activity">
    <reaction evidence="1">
        <text>(2E)-decenoyl-[ACP] = (3Z)-decenoyl-[ACP]</text>
        <dbReference type="Rhea" id="RHEA:23568"/>
        <dbReference type="Rhea" id="RHEA-COMP:9639"/>
        <dbReference type="Rhea" id="RHEA-COMP:9927"/>
        <dbReference type="ChEBI" id="CHEBI:78467"/>
        <dbReference type="ChEBI" id="CHEBI:78798"/>
        <dbReference type="EC" id="5.3.3.14"/>
    </reaction>
</comment>
<comment type="pathway">
    <text evidence="1">Lipid metabolism; fatty acid biosynthesis.</text>
</comment>
<comment type="subunit">
    <text evidence="1">Homodimer.</text>
</comment>
<comment type="subcellular location">
    <subcellularLocation>
        <location evidence="1">Cytoplasm</location>
    </subcellularLocation>
</comment>
<comment type="similarity">
    <text evidence="1">Belongs to the thioester dehydratase family. FabA subfamily.</text>
</comment>
<gene>
    <name evidence="1" type="primary">fabA</name>
    <name type="ordered locus">PFL_1737</name>
</gene>
<protein>
    <recommendedName>
        <fullName evidence="1">3-hydroxydecanoyl-[acyl-carrier-protein] dehydratase</fullName>
        <ecNumber evidence="1">4.2.1.59</ecNumber>
    </recommendedName>
    <alternativeName>
        <fullName evidence="1">3-hydroxyacyl-[acyl-carrier-protein] dehydratase FabA</fullName>
    </alternativeName>
    <alternativeName>
        <fullName evidence="1">Beta-hydroxydecanoyl thioester dehydrase</fullName>
    </alternativeName>
    <alternativeName>
        <fullName evidence="1">Trans-2-decenoyl-[acyl-carrier-protein] isomerase</fullName>
        <ecNumber evidence="1">5.3.3.14</ecNumber>
    </alternativeName>
</protein>